<sequence length="348" mass="38575">NFSTPLNEYEEGSYESAGYTVLRILPLVVLGVTFVLGVLGNGLVIWVAGFRMTRTVTTICYLNLALADFSFTATLPFLIVSMAMGEKWPFGWFLCKLIHIVVDINLFGSVFLIGFIALDRCICVLHPVWAQNHRTVSLAMKVIVGPWILALVLTLPVFLFLTTVTIPNGDTYCTFNFASWGGTPEERLKVAITLLTARGIIRFVIGFSLPMSIVAICYGLIAAKIHKKGMIKSSRPLRVLTAVVASFFICWFPFQLVALLGTVWLKEMLFYGKYKIIDILVNPTSSLAFFNCCLNPMLYVFVGQDFRERLIHSLPTSLERALSEDSAPTNDTAANCASPPAETELQAM</sequence>
<evidence type="ECO:0000250" key="1">
    <source>
        <dbReference type="UniProtKB" id="O88536"/>
    </source>
</evidence>
<evidence type="ECO:0000250" key="2">
    <source>
        <dbReference type="UniProtKB" id="P25090"/>
    </source>
</evidence>
<evidence type="ECO:0000255" key="3"/>
<evidence type="ECO:0000255" key="4">
    <source>
        <dbReference type="PROSITE-ProRule" id="PRU00521"/>
    </source>
</evidence>
<evidence type="ECO:0000256" key="5">
    <source>
        <dbReference type="SAM" id="MobiDB-lite"/>
    </source>
</evidence>
<comment type="function">
    <text evidence="1 2">Low affinity receptor for N-formyl-methionyl peptides, which are powerful neutrophil chemotactic factors (By similarity). Binding of FMLP to the receptor causes activation of neutrophils (By similarity). This response is mediated via a G-protein that activates a phosphatidylinositol-calcium second messenger system (By similarity). Receptor for the chemokine-like protein FAM19A5, mediating FAM19A5-stimulated macrophage chemotaxis and the inhibitory effect on TNFSF11/RANKL-induced osteoclast differentiation (By similarity).</text>
</comment>
<comment type="subunit">
    <text evidence="2">Interacts with Amyloid-beta protein 42, product of APP; the interaction takes place at the cell surface and the complex is then rapidly internalized.</text>
</comment>
<comment type="subcellular location">
    <subcellularLocation>
        <location evidence="2">Cell membrane</location>
        <topology evidence="2">Multi-pass membrane protein</topology>
    </subcellularLocation>
    <text evidence="2">Associates with Amyloid-beta protein 42, product of APP, at the cell surface and the complex is then rapidly internalized.</text>
</comment>
<comment type="similarity">
    <text evidence="4">Belongs to the G-protein coupled receptor 1 family.</text>
</comment>
<name>FPR2_PANTR</name>
<protein>
    <recommendedName>
        <fullName>N-formyl peptide receptor 2</fullName>
    </recommendedName>
    <alternativeName>
        <fullName>FMLP-related receptor I</fullName>
        <shortName>FMLP-R-I</shortName>
    </alternativeName>
    <alternativeName>
        <fullName>Formyl peptide receptor-like 1</fullName>
    </alternativeName>
</protein>
<proteinExistence type="inferred from homology"/>
<feature type="chain" id="PRO_0000069454" description="N-formyl peptide receptor 2">
    <location>
        <begin position="1" status="less than"/>
        <end position="348" status="greater than"/>
    </location>
</feature>
<feature type="topological domain" description="Extracellular" evidence="3">
    <location>
        <begin position="1" status="less than"/>
        <end position="24"/>
    </location>
</feature>
<feature type="transmembrane region" description="Helical; Name=1" evidence="3">
    <location>
        <begin position="25"/>
        <end position="47"/>
    </location>
</feature>
<feature type="topological domain" description="Cytoplasmic" evidence="3">
    <location>
        <begin position="48"/>
        <end position="58"/>
    </location>
</feature>
<feature type="transmembrane region" description="Helical; Name=2" evidence="3">
    <location>
        <begin position="59"/>
        <end position="80"/>
    </location>
</feature>
<feature type="topological domain" description="Extracellular" evidence="3">
    <location>
        <begin position="81"/>
        <end position="97"/>
    </location>
</feature>
<feature type="transmembrane region" description="Helical; Name=3" evidence="3">
    <location>
        <begin position="98"/>
        <end position="118"/>
    </location>
</feature>
<feature type="topological domain" description="Cytoplasmic" evidence="3">
    <location>
        <begin position="119"/>
        <end position="137"/>
    </location>
</feature>
<feature type="transmembrane region" description="Helical; Name=4" evidence="3">
    <location>
        <begin position="138"/>
        <end position="159"/>
    </location>
</feature>
<feature type="topological domain" description="Extracellular" evidence="3">
    <location>
        <begin position="160"/>
        <end position="202"/>
    </location>
</feature>
<feature type="transmembrane region" description="Helical; Name=5" evidence="3">
    <location>
        <begin position="203"/>
        <end position="223"/>
    </location>
</feature>
<feature type="topological domain" description="Cytoplasmic" evidence="3">
    <location>
        <begin position="224"/>
        <end position="239"/>
    </location>
</feature>
<feature type="transmembrane region" description="Helical; Name=6" evidence="3">
    <location>
        <begin position="240"/>
        <end position="263"/>
    </location>
</feature>
<feature type="topological domain" description="Extracellular" evidence="3">
    <location>
        <begin position="264"/>
        <end position="283"/>
    </location>
</feature>
<feature type="transmembrane region" description="Helical; Name=7" evidence="3">
    <location>
        <begin position="284"/>
        <end position="303"/>
    </location>
</feature>
<feature type="topological domain" description="Cytoplasmic" evidence="3">
    <location>
        <begin position="304"/>
        <end position="348"/>
    </location>
</feature>
<feature type="region of interest" description="Disordered" evidence="5">
    <location>
        <begin position="322"/>
        <end position="348"/>
    </location>
</feature>
<feature type="compositionally biased region" description="Polar residues" evidence="5">
    <location>
        <begin position="326"/>
        <end position="335"/>
    </location>
</feature>
<feature type="glycosylation site" description="N-linked (GlcNAc...) asparagine" evidence="3">
    <location>
        <position position="1"/>
    </location>
</feature>
<feature type="disulfide bond" evidence="4">
    <location>
        <begin position="95"/>
        <end position="173"/>
    </location>
</feature>
<feature type="non-terminal residue">
    <location>
        <position position="1"/>
    </location>
</feature>
<feature type="non-terminal residue">
    <location>
        <position position="348"/>
    </location>
</feature>
<keyword id="KW-1003">Cell membrane</keyword>
<keyword id="KW-0145">Chemotaxis</keyword>
<keyword id="KW-1015">Disulfide bond</keyword>
<keyword id="KW-0297">G-protein coupled receptor</keyword>
<keyword id="KW-0325">Glycoprotein</keyword>
<keyword id="KW-0472">Membrane</keyword>
<keyword id="KW-0675">Receptor</keyword>
<keyword id="KW-1185">Reference proteome</keyword>
<keyword id="KW-0807">Transducer</keyword>
<keyword id="KW-0812">Transmembrane</keyword>
<keyword id="KW-1133">Transmembrane helix</keyword>
<organism>
    <name type="scientific">Pan troglodytes</name>
    <name type="common">Chimpanzee</name>
    <dbReference type="NCBI Taxonomy" id="9598"/>
    <lineage>
        <taxon>Eukaryota</taxon>
        <taxon>Metazoa</taxon>
        <taxon>Chordata</taxon>
        <taxon>Craniata</taxon>
        <taxon>Vertebrata</taxon>
        <taxon>Euteleostomi</taxon>
        <taxon>Mammalia</taxon>
        <taxon>Eutheria</taxon>
        <taxon>Euarchontoglires</taxon>
        <taxon>Primates</taxon>
        <taxon>Haplorrhini</taxon>
        <taxon>Catarrhini</taxon>
        <taxon>Hominidae</taxon>
        <taxon>Pan</taxon>
    </lineage>
</organism>
<dbReference type="EMBL" id="X97739">
    <property type="protein sequence ID" value="CAA66323.1"/>
    <property type="molecule type" value="Genomic_DNA"/>
</dbReference>
<dbReference type="SMR" id="P79242"/>
<dbReference type="FunCoup" id="P79242">
    <property type="interactions" value="433"/>
</dbReference>
<dbReference type="GlyCosmos" id="P79242">
    <property type="glycosylation" value="1 site, No reported glycans"/>
</dbReference>
<dbReference type="PaxDb" id="9598-ENSPTRP00000061117"/>
<dbReference type="eggNOG" id="KOG3656">
    <property type="taxonomic scope" value="Eukaryota"/>
</dbReference>
<dbReference type="InParanoid" id="P79242"/>
<dbReference type="Proteomes" id="UP000002277">
    <property type="component" value="Unplaced"/>
</dbReference>
<dbReference type="GO" id="GO:0005886">
    <property type="term" value="C:plasma membrane"/>
    <property type="evidence" value="ECO:0000318"/>
    <property type="project" value="GO_Central"/>
</dbReference>
<dbReference type="GO" id="GO:0004875">
    <property type="term" value="F:complement receptor activity"/>
    <property type="evidence" value="ECO:0000318"/>
    <property type="project" value="GO_Central"/>
</dbReference>
<dbReference type="GO" id="GO:0004982">
    <property type="term" value="F:N-formyl peptide receptor activity"/>
    <property type="evidence" value="ECO:0000318"/>
    <property type="project" value="GO_Central"/>
</dbReference>
<dbReference type="GO" id="GO:0006935">
    <property type="term" value="P:chemotaxis"/>
    <property type="evidence" value="ECO:0007669"/>
    <property type="project" value="UniProtKB-KW"/>
</dbReference>
<dbReference type="GO" id="GO:0002430">
    <property type="term" value="P:complement receptor mediated signaling pathway"/>
    <property type="evidence" value="ECO:0000318"/>
    <property type="project" value="GO_Central"/>
</dbReference>
<dbReference type="GO" id="GO:0006954">
    <property type="term" value="P:inflammatory response"/>
    <property type="evidence" value="ECO:0000318"/>
    <property type="project" value="GO_Central"/>
</dbReference>
<dbReference type="GO" id="GO:0007200">
    <property type="term" value="P:phospholipase C-activating G protein-coupled receptor signaling pathway"/>
    <property type="evidence" value="ECO:0000318"/>
    <property type="project" value="GO_Central"/>
</dbReference>
<dbReference type="GO" id="GO:0007204">
    <property type="term" value="P:positive regulation of cytosolic calcium ion concentration"/>
    <property type="evidence" value="ECO:0000318"/>
    <property type="project" value="GO_Central"/>
</dbReference>
<dbReference type="CDD" id="cd15117">
    <property type="entry name" value="7tmA_FPR-like"/>
    <property type="match status" value="1"/>
</dbReference>
<dbReference type="FunFam" id="1.20.1070.10:FF:000034">
    <property type="entry name" value="G-protein coupled receptor 1"/>
    <property type="match status" value="1"/>
</dbReference>
<dbReference type="Gene3D" id="1.20.1070.10">
    <property type="entry name" value="Rhodopsin 7-helix transmembrane proteins"/>
    <property type="match status" value="1"/>
</dbReference>
<dbReference type="InterPro" id="IPR000826">
    <property type="entry name" value="Formyl_rcpt-rel"/>
</dbReference>
<dbReference type="InterPro" id="IPR000276">
    <property type="entry name" value="GPCR_Rhodpsn"/>
</dbReference>
<dbReference type="InterPro" id="IPR017452">
    <property type="entry name" value="GPCR_Rhodpsn_7TM"/>
</dbReference>
<dbReference type="PANTHER" id="PTHR24225">
    <property type="entry name" value="CHEMOTACTIC RECEPTOR"/>
    <property type="match status" value="1"/>
</dbReference>
<dbReference type="PANTHER" id="PTHR24225:SF0">
    <property type="entry name" value="N-FORMYL PEPTIDE RECEPTOR 2"/>
    <property type="match status" value="1"/>
</dbReference>
<dbReference type="Pfam" id="PF00001">
    <property type="entry name" value="7tm_1"/>
    <property type="match status" value="1"/>
</dbReference>
<dbReference type="PRINTS" id="PR00526">
    <property type="entry name" value="FMETLEUPHER"/>
</dbReference>
<dbReference type="PRINTS" id="PR00237">
    <property type="entry name" value="GPCRRHODOPSN"/>
</dbReference>
<dbReference type="SUPFAM" id="SSF81321">
    <property type="entry name" value="Family A G protein-coupled receptor-like"/>
    <property type="match status" value="1"/>
</dbReference>
<dbReference type="PROSITE" id="PS00237">
    <property type="entry name" value="G_PROTEIN_RECEP_F1_1"/>
    <property type="match status" value="1"/>
</dbReference>
<dbReference type="PROSITE" id="PS50262">
    <property type="entry name" value="G_PROTEIN_RECEP_F1_2"/>
    <property type="match status" value="1"/>
</dbReference>
<gene>
    <name type="primary">FPR2</name>
    <name type="synonym">FPRL1</name>
</gene>
<reference key="1">
    <citation type="journal article" date="1996" name="Immunogenetics">
        <title>Molecular evolution of the N-formyl peptide and C5a receptors in non-human primates.</title>
        <authorList>
            <person name="Alvarez V."/>
            <person name="Coto E."/>
            <person name="Sehen F."/>
            <person name="Gouzalek-Koces S."/>
            <person name="Lopez-Larrea C."/>
        </authorList>
    </citation>
    <scope>NUCLEOTIDE SEQUENCE [GENOMIC DNA]</scope>
</reference>
<accession>P79242</accession>